<name>SLYX_XANCB</name>
<protein>
    <recommendedName>
        <fullName evidence="1">Protein SlyX homolog</fullName>
    </recommendedName>
</protein>
<evidence type="ECO:0000255" key="1">
    <source>
        <dbReference type="HAMAP-Rule" id="MF_00715"/>
    </source>
</evidence>
<proteinExistence type="inferred from homology"/>
<sequence length="78" mass="8821">MHEQLSPRDQELEARLVELETRLSFQEQALTELSEALADARLTGARNAELIRHLLEDLGKVRSTLFADAADEPPPPHY</sequence>
<gene>
    <name evidence="1" type="primary">slyX</name>
    <name type="ordered locus">xcc-b100_2768</name>
</gene>
<comment type="similarity">
    <text evidence="1">Belongs to the SlyX family.</text>
</comment>
<feature type="chain" id="PRO_1000195860" description="Protein SlyX homolog">
    <location>
        <begin position="1"/>
        <end position="78"/>
    </location>
</feature>
<reference key="1">
    <citation type="journal article" date="2008" name="J. Biotechnol.">
        <title>The genome of Xanthomonas campestris pv. campestris B100 and its use for the reconstruction of metabolic pathways involved in xanthan biosynthesis.</title>
        <authorList>
            <person name="Vorhoelter F.-J."/>
            <person name="Schneiker S."/>
            <person name="Goesmann A."/>
            <person name="Krause L."/>
            <person name="Bekel T."/>
            <person name="Kaiser O."/>
            <person name="Linke B."/>
            <person name="Patschkowski T."/>
            <person name="Rueckert C."/>
            <person name="Schmid J."/>
            <person name="Sidhu V.K."/>
            <person name="Sieber V."/>
            <person name="Tauch A."/>
            <person name="Watt S.A."/>
            <person name="Weisshaar B."/>
            <person name="Becker A."/>
            <person name="Niehaus K."/>
            <person name="Puehler A."/>
        </authorList>
    </citation>
    <scope>NUCLEOTIDE SEQUENCE [LARGE SCALE GENOMIC DNA]</scope>
    <source>
        <strain>B100</strain>
    </source>
</reference>
<organism>
    <name type="scientific">Xanthomonas campestris pv. campestris (strain B100)</name>
    <dbReference type="NCBI Taxonomy" id="509169"/>
    <lineage>
        <taxon>Bacteria</taxon>
        <taxon>Pseudomonadati</taxon>
        <taxon>Pseudomonadota</taxon>
        <taxon>Gammaproteobacteria</taxon>
        <taxon>Lysobacterales</taxon>
        <taxon>Lysobacteraceae</taxon>
        <taxon>Xanthomonas</taxon>
    </lineage>
</organism>
<dbReference type="EMBL" id="AM920689">
    <property type="protein sequence ID" value="CAP52129.1"/>
    <property type="molecule type" value="Genomic_DNA"/>
</dbReference>
<dbReference type="SMR" id="B0RVR1"/>
<dbReference type="KEGG" id="xca:xcc-b100_2768"/>
<dbReference type="HOGENOM" id="CLU_180796_4_2_6"/>
<dbReference type="Proteomes" id="UP000001188">
    <property type="component" value="Chromosome"/>
</dbReference>
<dbReference type="Gene3D" id="1.20.5.300">
    <property type="match status" value="1"/>
</dbReference>
<dbReference type="HAMAP" id="MF_00715">
    <property type="entry name" value="SlyX"/>
    <property type="match status" value="1"/>
</dbReference>
<dbReference type="InterPro" id="IPR007236">
    <property type="entry name" value="SlyX"/>
</dbReference>
<dbReference type="NCBIfam" id="NF002024">
    <property type="entry name" value="PRK00846.1"/>
    <property type="match status" value="1"/>
</dbReference>
<dbReference type="PANTHER" id="PTHR36508">
    <property type="entry name" value="PROTEIN SLYX"/>
    <property type="match status" value="1"/>
</dbReference>
<dbReference type="PANTHER" id="PTHR36508:SF1">
    <property type="entry name" value="PROTEIN SLYX"/>
    <property type="match status" value="1"/>
</dbReference>
<dbReference type="Pfam" id="PF04102">
    <property type="entry name" value="SlyX"/>
    <property type="match status" value="1"/>
</dbReference>
<accession>B0RVR1</accession>